<protein>
    <recommendedName>
        <fullName evidence="1">Large ribosomal subunit protein uL2</fullName>
    </recommendedName>
    <alternativeName>
        <fullName evidence="3">50S ribosomal protein L2</fullName>
    </alternativeName>
</protein>
<accession>Q0SQE7</accession>
<proteinExistence type="inferred from homology"/>
<comment type="function">
    <text evidence="1">One of the primary rRNA binding proteins. Required for association of the 30S and 50S subunits to form the 70S ribosome, for tRNA binding and peptide bond formation. It has been suggested to have peptidyltransferase activity; this is somewhat controversial. Makes several contacts with the 16S rRNA in the 70S ribosome.</text>
</comment>
<comment type="subunit">
    <text evidence="1">Part of the 50S ribosomal subunit. Forms a bridge to the 30S subunit in the 70S ribosome.</text>
</comment>
<comment type="similarity">
    <text evidence="1">Belongs to the universal ribosomal protein uL2 family.</text>
</comment>
<dbReference type="EMBL" id="CP000312">
    <property type="protein sequence ID" value="ABG86062.1"/>
    <property type="molecule type" value="Genomic_DNA"/>
</dbReference>
<dbReference type="RefSeq" id="WP_003460473.1">
    <property type="nucleotide sequence ID" value="NZ_CAXVKH010000004.1"/>
</dbReference>
<dbReference type="SMR" id="Q0SQE7"/>
<dbReference type="GeneID" id="93001012"/>
<dbReference type="KEGG" id="cpr:CPR_2396"/>
<dbReference type="Proteomes" id="UP000001824">
    <property type="component" value="Chromosome"/>
</dbReference>
<dbReference type="GO" id="GO:0015934">
    <property type="term" value="C:large ribosomal subunit"/>
    <property type="evidence" value="ECO:0007669"/>
    <property type="project" value="InterPro"/>
</dbReference>
<dbReference type="GO" id="GO:0019843">
    <property type="term" value="F:rRNA binding"/>
    <property type="evidence" value="ECO:0007669"/>
    <property type="project" value="UniProtKB-UniRule"/>
</dbReference>
<dbReference type="GO" id="GO:0003735">
    <property type="term" value="F:structural constituent of ribosome"/>
    <property type="evidence" value="ECO:0007669"/>
    <property type="project" value="InterPro"/>
</dbReference>
<dbReference type="GO" id="GO:0016740">
    <property type="term" value="F:transferase activity"/>
    <property type="evidence" value="ECO:0007669"/>
    <property type="project" value="InterPro"/>
</dbReference>
<dbReference type="GO" id="GO:0002181">
    <property type="term" value="P:cytoplasmic translation"/>
    <property type="evidence" value="ECO:0007669"/>
    <property type="project" value="TreeGrafter"/>
</dbReference>
<dbReference type="FunFam" id="2.30.30.30:FF:000001">
    <property type="entry name" value="50S ribosomal protein L2"/>
    <property type="match status" value="1"/>
</dbReference>
<dbReference type="FunFam" id="2.40.50.140:FF:000003">
    <property type="entry name" value="50S ribosomal protein L2"/>
    <property type="match status" value="1"/>
</dbReference>
<dbReference type="FunFam" id="4.10.950.10:FF:000001">
    <property type="entry name" value="50S ribosomal protein L2"/>
    <property type="match status" value="1"/>
</dbReference>
<dbReference type="Gene3D" id="2.30.30.30">
    <property type="match status" value="1"/>
</dbReference>
<dbReference type="Gene3D" id="2.40.50.140">
    <property type="entry name" value="Nucleic acid-binding proteins"/>
    <property type="match status" value="1"/>
</dbReference>
<dbReference type="Gene3D" id="4.10.950.10">
    <property type="entry name" value="Ribosomal protein L2, domain 3"/>
    <property type="match status" value="1"/>
</dbReference>
<dbReference type="HAMAP" id="MF_01320_B">
    <property type="entry name" value="Ribosomal_uL2_B"/>
    <property type="match status" value="1"/>
</dbReference>
<dbReference type="InterPro" id="IPR012340">
    <property type="entry name" value="NA-bd_OB-fold"/>
</dbReference>
<dbReference type="InterPro" id="IPR014722">
    <property type="entry name" value="Rib_uL2_dom2"/>
</dbReference>
<dbReference type="InterPro" id="IPR002171">
    <property type="entry name" value="Ribosomal_uL2"/>
</dbReference>
<dbReference type="InterPro" id="IPR005880">
    <property type="entry name" value="Ribosomal_uL2_bac/org-type"/>
</dbReference>
<dbReference type="InterPro" id="IPR022669">
    <property type="entry name" value="Ribosomal_uL2_C"/>
</dbReference>
<dbReference type="InterPro" id="IPR022671">
    <property type="entry name" value="Ribosomal_uL2_CS"/>
</dbReference>
<dbReference type="InterPro" id="IPR014726">
    <property type="entry name" value="Ribosomal_uL2_dom3"/>
</dbReference>
<dbReference type="InterPro" id="IPR022666">
    <property type="entry name" value="Ribosomal_uL2_RNA-bd_dom"/>
</dbReference>
<dbReference type="InterPro" id="IPR008991">
    <property type="entry name" value="Translation_prot_SH3-like_sf"/>
</dbReference>
<dbReference type="NCBIfam" id="TIGR01171">
    <property type="entry name" value="rplB_bact"/>
    <property type="match status" value="1"/>
</dbReference>
<dbReference type="PANTHER" id="PTHR13691:SF5">
    <property type="entry name" value="LARGE RIBOSOMAL SUBUNIT PROTEIN UL2M"/>
    <property type="match status" value="1"/>
</dbReference>
<dbReference type="PANTHER" id="PTHR13691">
    <property type="entry name" value="RIBOSOMAL PROTEIN L2"/>
    <property type="match status" value="1"/>
</dbReference>
<dbReference type="Pfam" id="PF00181">
    <property type="entry name" value="Ribosomal_L2"/>
    <property type="match status" value="1"/>
</dbReference>
<dbReference type="Pfam" id="PF03947">
    <property type="entry name" value="Ribosomal_L2_C"/>
    <property type="match status" value="1"/>
</dbReference>
<dbReference type="PIRSF" id="PIRSF002158">
    <property type="entry name" value="Ribosomal_L2"/>
    <property type="match status" value="1"/>
</dbReference>
<dbReference type="SMART" id="SM01383">
    <property type="entry name" value="Ribosomal_L2"/>
    <property type="match status" value="1"/>
</dbReference>
<dbReference type="SMART" id="SM01382">
    <property type="entry name" value="Ribosomal_L2_C"/>
    <property type="match status" value="1"/>
</dbReference>
<dbReference type="SUPFAM" id="SSF50249">
    <property type="entry name" value="Nucleic acid-binding proteins"/>
    <property type="match status" value="1"/>
</dbReference>
<dbReference type="SUPFAM" id="SSF50104">
    <property type="entry name" value="Translation proteins SH3-like domain"/>
    <property type="match status" value="1"/>
</dbReference>
<dbReference type="PROSITE" id="PS00467">
    <property type="entry name" value="RIBOSOMAL_L2"/>
    <property type="match status" value="1"/>
</dbReference>
<name>RL2_CLOPS</name>
<sequence>MALKKFNPTTPSRRQMTMPTFEEVTTNAPEKSLLVSLKKTGGRNAQGKITVRHHGGGAKRKYRIIDFKRNKDGIPAKVATVEYDPNRSAYIALVVYADGEKRYILAPVGLKVGDTVVSGPEADIKPGNALQLKHMPVGTFVHNIELQAGKGGQMVRSAGTSAQLMAKEGNYATLRLPSGEMRYVRIECKATVGTVSNTTHEIVNIGKAGRKRHMGWRPTVRGSVMNPCDHPHGGGEGRSPIGRPSPVTPWGKPALGYKTRKNKKYSDRFIIKRRNAK</sequence>
<gene>
    <name evidence="1" type="primary">rplB</name>
    <name type="ordered locus">CPR_2396</name>
</gene>
<keyword id="KW-0687">Ribonucleoprotein</keyword>
<keyword id="KW-0689">Ribosomal protein</keyword>
<keyword id="KW-0694">RNA-binding</keyword>
<keyword id="KW-0699">rRNA-binding</keyword>
<reference key="1">
    <citation type="journal article" date="2006" name="Genome Res.">
        <title>Skewed genomic variability in strains of the toxigenic bacterial pathogen, Clostridium perfringens.</title>
        <authorList>
            <person name="Myers G.S.A."/>
            <person name="Rasko D.A."/>
            <person name="Cheung J.K."/>
            <person name="Ravel J."/>
            <person name="Seshadri R."/>
            <person name="DeBoy R.T."/>
            <person name="Ren Q."/>
            <person name="Varga J."/>
            <person name="Awad M.M."/>
            <person name="Brinkac L.M."/>
            <person name="Daugherty S.C."/>
            <person name="Haft D.H."/>
            <person name="Dodson R.J."/>
            <person name="Madupu R."/>
            <person name="Nelson W.C."/>
            <person name="Rosovitz M.J."/>
            <person name="Sullivan S.A."/>
            <person name="Khouri H."/>
            <person name="Dimitrov G.I."/>
            <person name="Watkins K.L."/>
            <person name="Mulligan S."/>
            <person name="Benton J."/>
            <person name="Radune D."/>
            <person name="Fisher D.J."/>
            <person name="Atkins H.S."/>
            <person name="Hiscox T."/>
            <person name="Jost B.H."/>
            <person name="Billington S.J."/>
            <person name="Songer J.G."/>
            <person name="McClane B.A."/>
            <person name="Titball R.W."/>
            <person name="Rood J.I."/>
            <person name="Melville S.B."/>
            <person name="Paulsen I.T."/>
        </authorList>
    </citation>
    <scope>NUCLEOTIDE SEQUENCE [LARGE SCALE GENOMIC DNA]</scope>
    <source>
        <strain>SM101 / Type A</strain>
    </source>
</reference>
<organism>
    <name type="scientific">Clostridium perfringens (strain SM101 / Type A)</name>
    <dbReference type="NCBI Taxonomy" id="289380"/>
    <lineage>
        <taxon>Bacteria</taxon>
        <taxon>Bacillati</taxon>
        <taxon>Bacillota</taxon>
        <taxon>Clostridia</taxon>
        <taxon>Eubacteriales</taxon>
        <taxon>Clostridiaceae</taxon>
        <taxon>Clostridium</taxon>
    </lineage>
</organism>
<evidence type="ECO:0000255" key="1">
    <source>
        <dbReference type="HAMAP-Rule" id="MF_01320"/>
    </source>
</evidence>
<evidence type="ECO:0000256" key="2">
    <source>
        <dbReference type="SAM" id="MobiDB-lite"/>
    </source>
</evidence>
<evidence type="ECO:0000305" key="3"/>
<feature type="chain" id="PRO_0000309904" description="Large ribosomal subunit protein uL2">
    <location>
        <begin position="1"/>
        <end position="277"/>
    </location>
</feature>
<feature type="region of interest" description="Disordered" evidence="2">
    <location>
        <begin position="222"/>
        <end position="258"/>
    </location>
</feature>